<proteinExistence type="inferred from homology"/>
<protein>
    <recommendedName>
        <fullName evidence="1">Large ribosomal subunit protein bL25</fullName>
    </recommendedName>
    <alternativeName>
        <fullName evidence="3">50S ribosomal protein L25</fullName>
    </alternativeName>
    <alternativeName>
        <fullName evidence="1">General stress protein CTC</fullName>
    </alternativeName>
</protein>
<accession>C5C9D7</accession>
<sequence>MSDQLKIKVTRRTDFGKGAARQARRAGLIPAVVYGHGQEPVHLLLPAQETTLAVRNPNALLTVVNEAGEEHLVLPKDIQRHAIKDTVDHLDLIEVRRGEKVVVEVTVQVEGEVAPGTEYVLDYVTVPVEADATDLPEAVTISVEGREAGDHVYAPDVQVPAGATLQLEDDIVIATVNEVVEQDLGDESVQEEQAAESAEGESEGSED</sequence>
<evidence type="ECO:0000255" key="1">
    <source>
        <dbReference type="HAMAP-Rule" id="MF_01334"/>
    </source>
</evidence>
<evidence type="ECO:0000256" key="2">
    <source>
        <dbReference type="SAM" id="MobiDB-lite"/>
    </source>
</evidence>
<evidence type="ECO:0000305" key="3"/>
<gene>
    <name evidence="1" type="primary">rplY</name>
    <name evidence="1" type="synonym">ctc</name>
    <name type="ordered locus">Mlut_05510</name>
</gene>
<comment type="function">
    <text evidence="1">This is one of the proteins that binds to the 5S RNA in the ribosome where it forms part of the central protuberance.</text>
</comment>
<comment type="subunit">
    <text evidence="1">Part of the 50S ribosomal subunit; part of the 5S rRNA/L5/L18/L25 subcomplex. Contacts the 5S rRNA. Binds to the 5S rRNA independently of L5 and L18.</text>
</comment>
<comment type="similarity">
    <text evidence="1">Belongs to the bacterial ribosomal protein bL25 family. CTC subfamily.</text>
</comment>
<organism>
    <name type="scientific">Micrococcus luteus (strain ATCC 4698 / DSM 20030 / JCM 1464 / CCM 169 / CCUG 5858 / IAM 1056 / NBRC 3333 / NCIMB 9278 / NCTC 2665 / VKM Ac-2230)</name>
    <name type="common">Micrococcus lysodeikticus</name>
    <dbReference type="NCBI Taxonomy" id="465515"/>
    <lineage>
        <taxon>Bacteria</taxon>
        <taxon>Bacillati</taxon>
        <taxon>Actinomycetota</taxon>
        <taxon>Actinomycetes</taxon>
        <taxon>Micrococcales</taxon>
        <taxon>Micrococcaceae</taxon>
        <taxon>Micrococcus</taxon>
    </lineage>
</organism>
<keyword id="KW-1185">Reference proteome</keyword>
<keyword id="KW-0687">Ribonucleoprotein</keyword>
<keyword id="KW-0689">Ribosomal protein</keyword>
<keyword id="KW-0694">RNA-binding</keyword>
<keyword id="KW-0699">rRNA-binding</keyword>
<reference key="1">
    <citation type="journal article" date="2010" name="J. Bacteriol.">
        <title>Genome sequence of the Fleming strain of Micrococcus luteus, a simple free-living actinobacterium.</title>
        <authorList>
            <person name="Young M."/>
            <person name="Artsatbanov V."/>
            <person name="Beller H.R."/>
            <person name="Chandra G."/>
            <person name="Chater K.F."/>
            <person name="Dover L.G."/>
            <person name="Goh E.B."/>
            <person name="Kahan T."/>
            <person name="Kaprelyants A.S."/>
            <person name="Kyrpides N."/>
            <person name="Lapidus A."/>
            <person name="Lowry S.R."/>
            <person name="Lykidis A."/>
            <person name="Mahillon J."/>
            <person name="Markowitz V."/>
            <person name="Mavromatis K."/>
            <person name="Mukamolova G.V."/>
            <person name="Oren A."/>
            <person name="Rokem J.S."/>
            <person name="Smith M.C."/>
            <person name="Young D.I."/>
            <person name="Greenblatt C.L."/>
        </authorList>
    </citation>
    <scope>NUCLEOTIDE SEQUENCE [LARGE SCALE GENOMIC DNA]</scope>
    <source>
        <strain>ATCC 4698 / DSM 20030 / JCM 1464 / CCM 169 / CCUG 5858 / IAM 1056 / NBRC 3333 / NCIMB 9278 / NCTC 2665 / VKM Ac-2230</strain>
    </source>
</reference>
<dbReference type="EMBL" id="CP001628">
    <property type="protein sequence ID" value="ACS30089.1"/>
    <property type="molecule type" value="Genomic_DNA"/>
</dbReference>
<dbReference type="RefSeq" id="WP_010079282.1">
    <property type="nucleotide sequence ID" value="NC_012803.1"/>
</dbReference>
<dbReference type="SMR" id="C5C9D7"/>
<dbReference type="STRING" id="465515.Mlut_05510"/>
<dbReference type="EnsemblBacteria" id="ACS30089">
    <property type="protein sequence ID" value="ACS30089"/>
    <property type="gene ID" value="Mlut_05510"/>
</dbReference>
<dbReference type="GeneID" id="93344726"/>
<dbReference type="KEGG" id="mlu:Mlut_05510"/>
<dbReference type="PATRIC" id="fig|465515.4.peg.520"/>
<dbReference type="eggNOG" id="COG1825">
    <property type="taxonomic scope" value="Bacteria"/>
</dbReference>
<dbReference type="HOGENOM" id="CLU_075939_1_0_11"/>
<dbReference type="Proteomes" id="UP000000738">
    <property type="component" value="Chromosome"/>
</dbReference>
<dbReference type="GO" id="GO:0022625">
    <property type="term" value="C:cytosolic large ribosomal subunit"/>
    <property type="evidence" value="ECO:0007669"/>
    <property type="project" value="TreeGrafter"/>
</dbReference>
<dbReference type="GO" id="GO:0008097">
    <property type="term" value="F:5S rRNA binding"/>
    <property type="evidence" value="ECO:0007669"/>
    <property type="project" value="InterPro"/>
</dbReference>
<dbReference type="GO" id="GO:0003735">
    <property type="term" value="F:structural constituent of ribosome"/>
    <property type="evidence" value="ECO:0007669"/>
    <property type="project" value="InterPro"/>
</dbReference>
<dbReference type="GO" id="GO:0006412">
    <property type="term" value="P:translation"/>
    <property type="evidence" value="ECO:0007669"/>
    <property type="project" value="UniProtKB-UniRule"/>
</dbReference>
<dbReference type="CDD" id="cd00495">
    <property type="entry name" value="Ribosomal_L25_TL5_CTC"/>
    <property type="match status" value="1"/>
</dbReference>
<dbReference type="Gene3D" id="2.170.120.20">
    <property type="entry name" value="Ribosomal protein L25, beta domain"/>
    <property type="match status" value="1"/>
</dbReference>
<dbReference type="Gene3D" id="2.40.240.10">
    <property type="entry name" value="Ribosomal Protein L25, Chain P"/>
    <property type="match status" value="1"/>
</dbReference>
<dbReference type="HAMAP" id="MF_01334">
    <property type="entry name" value="Ribosomal_bL25_CTC"/>
    <property type="match status" value="1"/>
</dbReference>
<dbReference type="InterPro" id="IPR020056">
    <property type="entry name" value="Rbsml_bL25/Gln-tRNA_synth_N"/>
</dbReference>
<dbReference type="InterPro" id="IPR011035">
    <property type="entry name" value="Ribosomal_bL25/Gln-tRNA_synth"/>
</dbReference>
<dbReference type="InterPro" id="IPR020057">
    <property type="entry name" value="Ribosomal_bL25_b-dom"/>
</dbReference>
<dbReference type="InterPro" id="IPR037121">
    <property type="entry name" value="Ribosomal_bL25_C"/>
</dbReference>
<dbReference type="InterPro" id="IPR001021">
    <property type="entry name" value="Ribosomal_bL25_long"/>
</dbReference>
<dbReference type="InterPro" id="IPR029751">
    <property type="entry name" value="Ribosomal_L25_dom"/>
</dbReference>
<dbReference type="InterPro" id="IPR020930">
    <property type="entry name" value="Ribosomal_uL5_bac-type"/>
</dbReference>
<dbReference type="NCBIfam" id="TIGR00731">
    <property type="entry name" value="bL25_bact_ctc"/>
    <property type="match status" value="1"/>
</dbReference>
<dbReference type="NCBIfam" id="NF004131">
    <property type="entry name" value="PRK05618.2-1"/>
    <property type="match status" value="1"/>
</dbReference>
<dbReference type="PANTHER" id="PTHR33284">
    <property type="entry name" value="RIBOSOMAL PROTEIN L25/GLN-TRNA SYNTHETASE, ANTI-CODON-BINDING DOMAIN-CONTAINING PROTEIN"/>
    <property type="match status" value="1"/>
</dbReference>
<dbReference type="PANTHER" id="PTHR33284:SF1">
    <property type="entry name" value="RIBOSOMAL PROTEIN L25_GLN-TRNA SYNTHETASE, ANTI-CODON-BINDING DOMAIN-CONTAINING PROTEIN"/>
    <property type="match status" value="1"/>
</dbReference>
<dbReference type="Pfam" id="PF01386">
    <property type="entry name" value="Ribosomal_L25p"/>
    <property type="match status" value="1"/>
</dbReference>
<dbReference type="Pfam" id="PF14693">
    <property type="entry name" value="Ribosomal_TL5_C"/>
    <property type="match status" value="1"/>
</dbReference>
<dbReference type="SUPFAM" id="SSF50715">
    <property type="entry name" value="Ribosomal protein L25-like"/>
    <property type="match status" value="1"/>
</dbReference>
<feature type="chain" id="PRO_1000214654" description="Large ribosomal subunit protein bL25">
    <location>
        <begin position="1"/>
        <end position="207"/>
    </location>
</feature>
<feature type="region of interest" description="Disordered" evidence="2">
    <location>
        <begin position="182"/>
        <end position="207"/>
    </location>
</feature>
<name>RL25_MICLC</name>